<proteinExistence type="inferred from homology"/>
<comment type="similarity">
    <text evidence="1">Belongs to the UPF0102 family.</text>
</comment>
<accession>Q2RJT6</accession>
<feature type="chain" id="PRO_1000009233" description="UPF0102 protein Moth_0988">
    <location>
        <begin position="1"/>
        <end position="120"/>
    </location>
</feature>
<organism>
    <name type="scientific">Moorella thermoacetica (strain ATCC 39073 / JCM 9320)</name>
    <dbReference type="NCBI Taxonomy" id="264732"/>
    <lineage>
        <taxon>Bacteria</taxon>
        <taxon>Bacillati</taxon>
        <taxon>Bacillota</taxon>
        <taxon>Clostridia</taxon>
        <taxon>Moorellales</taxon>
        <taxon>Moorellaceae</taxon>
        <taxon>Moorella</taxon>
    </lineage>
</organism>
<dbReference type="EMBL" id="CP000232">
    <property type="protein sequence ID" value="ABC19303.1"/>
    <property type="molecule type" value="Genomic_DNA"/>
</dbReference>
<dbReference type="RefSeq" id="YP_429846.1">
    <property type="nucleotide sequence ID" value="NC_007644.1"/>
</dbReference>
<dbReference type="SMR" id="Q2RJT6"/>
<dbReference type="STRING" id="264732.Moth_0988"/>
<dbReference type="EnsemblBacteria" id="ABC19303">
    <property type="protein sequence ID" value="ABC19303"/>
    <property type="gene ID" value="Moth_0988"/>
</dbReference>
<dbReference type="KEGG" id="mta:Moth_0988"/>
<dbReference type="PATRIC" id="fig|264732.11.peg.1062"/>
<dbReference type="eggNOG" id="COG0792">
    <property type="taxonomic scope" value="Bacteria"/>
</dbReference>
<dbReference type="HOGENOM" id="CLU_115353_2_3_9"/>
<dbReference type="OrthoDB" id="9802516at2"/>
<dbReference type="GO" id="GO:0003676">
    <property type="term" value="F:nucleic acid binding"/>
    <property type="evidence" value="ECO:0007669"/>
    <property type="project" value="InterPro"/>
</dbReference>
<dbReference type="Gene3D" id="3.40.1350.10">
    <property type="match status" value="1"/>
</dbReference>
<dbReference type="HAMAP" id="MF_00048">
    <property type="entry name" value="UPF0102"/>
    <property type="match status" value="1"/>
</dbReference>
<dbReference type="InterPro" id="IPR011335">
    <property type="entry name" value="Restrct_endonuc-II-like"/>
</dbReference>
<dbReference type="InterPro" id="IPR011856">
    <property type="entry name" value="tRNA_endonuc-like_dom_sf"/>
</dbReference>
<dbReference type="InterPro" id="IPR003509">
    <property type="entry name" value="UPF0102_YraN-like"/>
</dbReference>
<dbReference type="NCBIfam" id="NF009150">
    <property type="entry name" value="PRK12497.1-3"/>
    <property type="match status" value="1"/>
</dbReference>
<dbReference type="NCBIfam" id="NF009154">
    <property type="entry name" value="PRK12497.3-3"/>
    <property type="match status" value="1"/>
</dbReference>
<dbReference type="NCBIfam" id="TIGR00252">
    <property type="entry name" value="YraN family protein"/>
    <property type="match status" value="1"/>
</dbReference>
<dbReference type="PANTHER" id="PTHR34039">
    <property type="entry name" value="UPF0102 PROTEIN YRAN"/>
    <property type="match status" value="1"/>
</dbReference>
<dbReference type="PANTHER" id="PTHR34039:SF1">
    <property type="entry name" value="UPF0102 PROTEIN YRAN"/>
    <property type="match status" value="1"/>
</dbReference>
<dbReference type="Pfam" id="PF02021">
    <property type="entry name" value="UPF0102"/>
    <property type="match status" value="1"/>
</dbReference>
<dbReference type="SUPFAM" id="SSF52980">
    <property type="entry name" value="Restriction endonuclease-like"/>
    <property type="match status" value="1"/>
</dbReference>
<sequence length="120" mass="13447">MTMTRRRRGQIGEAAAAALLADSGYRILERNYRCPLGEIDIVAAQGEEIVFIEVRTRSSQTFGTPQESVDGRKRLRLRRLAAYYLGSRGLAGRSCRFDVVAVWLDRQERVAGVEVIKGAF</sequence>
<name>Y988_MOOTA</name>
<evidence type="ECO:0000255" key="1">
    <source>
        <dbReference type="HAMAP-Rule" id="MF_00048"/>
    </source>
</evidence>
<gene>
    <name type="ordered locus">Moth_0988</name>
</gene>
<reference key="1">
    <citation type="journal article" date="2008" name="Environ. Microbiol.">
        <title>The complete genome sequence of Moorella thermoacetica (f. Clostridium thermoaceticum).</title>
        <authorList>
            <person name="Pierce E."/>
            <person name="Xie G."/>
            <person name="Barabote R.D."/>
            <person name="Saunders E."/>
            <person name="Han C.S."/>
            <person name="Detter J.C."/>
            <person name="Richardson P."/>
            <person name="Brettin T.S."/>
            <person name="Das A."/>
            <person name="Ljungdahl L.G."/>
            <person name="Ragsdale S.W."/>
        </authorList>
    </citation>
    <scope>NUCLEOTIDE SEQUENCE [LARGE SCALE GENOMIC DNA]</scope>
    <source>
        <strain>ATCC 39073 / JCM 9320</strain>
    </source>
</reference>
<protein>
    <recommendedName>
        <fullName evidence="1">UPF0102 protein Moth_0988</fullName>
    </recommendedName>
</protein>